<feature type="chain" id="PRO_0000299768" description="Uncharacterized protein API2">
    <location>
        <begin position="1"/>
        <end position="109"/>
    </location>
</feature>
<feature type="region of interest" description="Disordered" evidence="1">
    <location>
        <begin position="67"/>
        <end position="96"/>
    </location>
</feature>
<feature type="compositionally biased region" description="Polar residues" evidence="1">
    <location>
        <begin position="78"/>
        <end position="87"/>
    </location>
</feature>
<dbReference type="EMBL" id="U33057">
    <property type="protein sequence ID" value="AAB64965.1"/>
    <property type="molecule type" value="Genomic_DNA"/>
</dbReference>
<dbReference type="EMBL" id="AY558338">
    <property type="protein sequence ID" value="AAS56664.1"/>
    <property type="molecule type" value="Genomic_DNA"/>
</dbReference>
<dbReference type="EMBL" id="BK006938">
    <property type="protein sequence ID" value="DAA80283.1"/>
    <property type="molecule type" value="Genomic_DNA"/>
</dbReference>
<dbReference type="PIR" id="S69581">
    <property type="entry name" value="S69581"/>
</dbReference>
<dbReference type="RefSeq" id="NP_001335763.1">
    <property type="nucleotide sequence ID" value="NM_001348819.1"/>
</dbReference>
<dbReference type="FunCoup" id="Q04413">
    <property type="interactions" value="69"/>
</dbReference>
<dbReference type="STRING" id="4932.YDR525W"/>
<dbReference type="PaxDb" id="4932-YDR525W"/>
<dbReference type="EnsemblFungi" id="YDR525W_mRNA">
    <property type="protein sequence ID" value="YDR525W"/>
    <property type="gene ID" value="YDR525W"/>
</dbReference>
<dbReference type="GeneID" id="852137"/>
<dbReference type="AGR" id="SGD:S000002933"/>
<dbReference type="SGD" id="S000002933">
    <property type="gene designation" value="API2"/>
</dbReference>
<dbReference type="HOGENOM" id="CLU_2186014_0_0_1"/>
<dbReference type="InParanoid" id="Q04413"/>
<dbReference type="PRO" id="PR:Q04413"/>
<dbReference type="Proteomes" id="UP000002311">
    <property type="component" value="Chromosome IV"/>
</dbReference>
<dbReference type="RNAct" id="Q04413">
    <property type="molecule type" value="protein"/>
</dbReference>
<evidence type="ECO:0000256" key="1">
    <source>
        <dbReference type="SAM" id="MobiDB-lite"/>
    </source>
</evidence>
<evidence type="ECO:0000269" key="2">
    <source>
    </source>
</evidence>
<comment type="disruption phenotype">
    <text evidence="2">Insertion mutation in a CDC34 mutant background causes altered bud morphology.</text>
</comment>
<sequence>MEKKIKNFSSSLYMRRKARKTTAMTHSTISHVTNVKKAMIFFLLSFSHFSSGYSACKKKRRGSGLRYFGNKLWRPTPRSGQSGQSRPKTGPHGSQRVVFLELKKAQRWA</sequence>
<organism>
    <name type="scientific">Saccharomyces cerevisiae (strain ATCC 204508 / S288c)</name>
    <name type="common">Baker's yeast</name>
    <dbReference type="NCBI Taxonomy" id="559292"/>
    <lineage>
        <taxon>Eukaryota</taxon>
        <taxon>Fungi</taxon>
        <taxon>Dikarya</taxon>
        <taxon>Ascomycota</taxon>
        <taxon>Saccharomycotina</taxon>
        <taxon>Saccharomycetes</taxon>
        <taxon>Saccharomycetales</taxon>
        <taxon>Saccharomycetaceae</taxon>
        <taxon>Saccharomyces</taxon>
    </lineage>
</organism>
<reference key="1">
    <citation type="journal article" date="1997" name="Nature">
        <title>The nucleotide sequence of Saccharomyces cerevisiae chromosome IV.</title>
        <authorList>
            <person name="Jacq C."/>
            <person name="Alt-Moerbe J."/>
            <person name="Andre B."/>
            <person name="Arnold W."/>
            <person name="Bahr A."/>
            <person name="Ballesta J.P.G."/>
            <person name="Bargues M."/>
            <person name="Baron L."/>
            <person name="Becker A."/>
            <person name="Biteau N."/>
            <person name="Bloecker H."/>
            <person name="Blugeon C."/>
            <person name="Boskovic J."/>
            <person name="Brandt P."/>
            <person name="Brueckner M."/>
            <person name="Buitrago M.J."/>
            <person name="Coster F."/>
            <person name="Delaveau T."/>
            <person name="del Rey F."/>
            <person name="Dujon B."/>
            <person name="Eide L.G."/>
            <person name="Garcia-Cantalejo J.M."/>
            <person name="Goffeau A."/>
            <person name="Gomez-Peris A."/>
            <person name="Granotier C."/>
            <person name="Hanemann V."/>
            <person name="Hankeln T."/>
            <person name="Hoheisel J.D."/>
            <person name="Jaeger W."/>
            <person name="Jimenez A."/>
            <person name="Jonniaux J.-L."/>
            <person name="Kraemer C."/>
            <person name="Kuester H."/>
            <person name="Laamanen P."/>
            <person name="Legros Y."/>
            <person name="Louis E.J."/>
            <person name="Moeller-Rieker S."/>
            <person name="Monnet A."/>
            <person name="Moro M."/>
            <person name="Mueller-Auer S."/>
            <person name="Nussbaumer B."/>
            <person name="Paricio N."/>
            <person name="Paulin L."/>
            <person name="Perea J."/>
            <person name="Perez-Alonso M."/>
            <person name="Perez-Ortin J.E."/>
            <person name="Pohl T.M."/>
            <person name="Prydz H."/>
            <person name="Purnelle B."/>
            <person name="Rasmussen S.W."/>
            <person name="Remacha M.A."/>
            <person name="Revuelta J.L."/>
            <person name="Rieger M."/>
            <person name="Salom D."/>
            <person name="Saluz H.P."/>
            <person name="Saiz J.E."/>
            <person name="Saren A.-M."/>
            <person name="Schaefer M."/>
            <person name="Scharfe M."/>
            <person name="Schmidt E.R."/>
            <person name="Schneider C."/>
            <person name="Scholler P."/>
            <person name="Schwarz S."/>
            <person name="Soler-Mira A."/>
            <person name="Urrestarazu L.A."/>
            <person name="Verhasselt P."/>
            <person name="Vissers S."/>
            <person name="Voet M."/>
            <person name="Volckaert G."/>
            <person name="Wagner G."/>
            <person name="Wambutt R."/>
            <person name="Wedler E."/>
            <person name="Wedler H."/>
            <person name="Woelfl S."/>
            <person name="Harris D.E."/>
            <person name="Bowman S."/>
            <person name="Brown D."/>
            <person name="Churcher C.M."/>
            <person name="Connor R."/>
            <person name="Dedman K."/>
            <person name="Gentles S."/>
            <person name="Hamlin N."/>
            <person name="Hunt S."/>
            <person name="Jones L."/>
            <person name="McDonald S."/>
            <person name="Murphy L.D."/>
            <person name="Niblett D."/>
            <person name="Odell C."/>
            <person name="Oliver K."/>
            <person name="Rajandream M.A."/>
            <person name="Richards C."/>
            <person name="Shore L."/>
            <person name="Walsh S.V."/>
            <person name="Barrell B.G."/>
            <person name="Dietrich F.S."/>
            <person name="Mulligan J.T."/>
            <person name="Allen E."/>
            <person name="Araujo R."/>
            <person name="Aviles E."/>
            <person name="Berno A."/>
            <person name="Carpenter J."/>
            <person name="Chen E."/>
            <person name="Cherry J.M."/>
            <person name="Chung E."/>
            <person name="Duncan M."/>
            <person name="Hunicke-Smith S."/>
            <person name="Hyman R.W."/>
            <person name="Komp C."/>
            <person name="Lashkari D."/>
            <person name="Lew H."/>
            <person name="Lin D."/>
            <person name="Mosedale D."/>
            <person name="Nakahara K."/>
            <person name="Namath A."/>
            <person name="Oefner P."/>
            <person name="Oh C."/>
            <person name="Petel F.X."/>
            <person name="Roberts D."/>
            <person name="Schramm S."/>
            <person name="Schroeder M."/>
            <person name="Shogren T."/>
            <person name="Shroff N."/>
            <person name="Winant A."/>
            <person name="Yelton M.A."/>
            <person name="Botstein D."/>
            <person name="Davis R.W."/>
            <person name="Johnston M."/>
            <person name="Andrews S."/>
            <person name="Brinkman R."/>
            <person name="Cooper J."/>
            <person name="Ding H."/>
            <person name="Du Z."/>
            <person name="Favello A."/>
            <person name="Fulton L."/>
            <person name="Gattung S."/>
            <person name="Greco T."/>
            <person name="Hallsworth K."/>
            <person name="Hawkins J."/>
            <person name="Hillier L.W."/>
            <person name="Jier M."/>
            <person name="Johnson D."/>
            <person name="Johnston L."/>
            <person name="Kirsten J."/>
            <person name="Kucaba T."/>
            <person name="Langston Y."/>
            <person name="Latreille P."/>
            <person name="Le T."/>
            <person name="Mardis E."/>
            <person name="Menezes S."/>
            <person name="Miller N."/>
            <person name="Nhan M."/>
            <person name="Pauley A."/>
            <person name="Peluso D."/>
            <person name="Rifkin L."/>
            <person name="Riles L."/>
            <person name="Taich A."/>
            <person name="Trevaskis E."/>
            <person name="Vignati D."/>
            <person name="Wilcox L."/>
            <person name="Wohldman P."/>
            <person name="Vaudin M."/>
            <person name="Wilson R."/>
            <person name="Waterston R."/>
            <person name="Albermann K."/>
            <person name="Hani J."/>
            <person name="Heumann K."/>
            <person name="Kleine K."/>
            <person name="Mewes H.-W."/>
            <person name="Zollner A."/>
            <person name="Zaccaria P."/>
        </authorList>
    </citation>
    <scope>NUCLEOTIDE SEQUENCE [LARGE SCALE GENOMIC DNA]</scope>
    <source>
        <strain>ATCC 204508 / S288c</strain>
    </source>
</reference>
<reference key="2">
    <citation type="journal article" date="2014" name="G3 (Bethesda)">
        <title>The reference genome sequence of Saccharomyces cerevisiae: Then and now.</title>
        <authorList>
            <person name="Engel S.R."/>
            <person name="Dietrich F.S."/>
            <person name="Fisk D.G."/>
            <person name="Binkley G."/>
            <person name="Balakrishnan R."/>
            <person name="Costanzo M.C."/>
            <person name="Dwight S.S."/>
            <person name="Hitz B.C."/>
            <person name="Karra K."/>
            <person name="Nash R.S."/>
            <person name="Weng S."/>
            <person name="Wong E.D."/>
            <person name="Lloyd P."/>
            <person name="Skrzypek M.S."/>
            <person name="Miyasato S.R."/>
            <person name="Simison M."/>
            <person name="Cherry J.M."/>
        </authorList>
    </citation>
    <scope>GENOME REANNOTATION</scope>
    <source>
        <strain>ATCC 204508 / S288c</strain>
    </source>
</reference>
<reference key="3">
    <citation type="journal article" date="2007" name="Genome Res.">
        <title>Approaching a complete repository of sequence-verified protein-encoding clones for Saccharomyces cerevisiae.</title>
        <authorList>
            <person name="Hu Y."/>
            <person name="Rolfs A."/>
            <person name="Bhullar B."/>
            <person name="Murthy T.V.S."/>
            <person name="Zhu C."/>
            <person name="Berger M.F."/>
            <person name="Camargo A.A."/>
            <person name="Kelley F."/>
            <person name="McCarron S."/>
            <person name="Jepson D."/>
            <person name="Richardson A."/>
            <person name="Raphael J."/>
            <person name="Moreira D."/>
            <person name="Taycher E."/>
            <person name="Zuo D."/>
            <person name="Mohr S."/>
            <person name="Kane M.F."/>
            <person name="Williamson J."/>
            <person name="Simpson A.J.G."/>
            <person name="Bulyk M.L."/>
            <person name="Harlow E."/>
            <person name="Marsischky G."/>
            <person name="Kolodner R.D."/>
            <person name="LaBaer J."/>
        </authorList>
    </citation>
    <scope>NUCLEOTIDE SEQUENCE [GENOMIC DNA]</scope>
    <source>
        <strain>ATCC 204508 / S288c</strain>
    </source>
</reference>
<reference key="4">
    <citation type="journal article" date="2002" name="Funct. Integr. Genomics">
        <title>Large-scale identification of genes important for apical growth in Saccharomyces cerevisiae by directed allele replacement technology (DART) screening.</title>
        <authorList>
            <person name="Bidlingmaier S."/>
            <person name="Snyder M.A."/>
        </authorList>
    </citation>
    <scope>DISRUPTION PHENOTYPE</scope>
</reference>
<keyword id="KW-1185">Reference proteome</keyword>
<proteinExistence type="predicted"/>
<gene>
    <name type="primary">API2</name>
    <name type="ordered locus">YDR525W</name>
</gene>
<accession>Q04413</accession>
<accession>A0A1S0T063</accession>
<protein>
    <recommendedName>
        <fullName>Uncharacterized protein API2</fullName>
    </recommendedName>
</protein>
<name>API2_YEAST</name>